<reference key="1">
    <citation type="submission" date="2006-08" db="EMBL/GenBank/DDBJ databases">
        <title>Complete sequence of Shewanella frigidimarina NCIMB 400.</title>
        <authorList>
            <consortium name="US DOE Joint Genome Institute"/>
            <person name="Copeland A."/>
            <person name="Lucas S."/>
            <person name="Lapidus A."/>
            <person name="Barry K."/>
            <person name="Detter J.C."/>
            <person name="Glavina del Rio T."/>
            <person name="Hammon N."/>
            <person name="Israni S."/>
            <person name="Dalin E."/>
            <person name="Tice H."/>
            <person name="Pitluck S."/>
            <person name="Fredrickson J.K."/>
            <person name="Kolker E."/>
            <person name="McCuel L.A."/>
            <person name="DiChristina T."/>
            <person name="Nealson K.H."/>
            <person name="Newman D."/>
            <person name="Tiedje J.M."/>
            <person name="Zhou J."/>
            <person name="Romine M.F."/>
            <person name="Culley D.E."/>
            <person name="Serres M."/>
            <person name="Chertkov O."/>
            <person name="Brettin T."/>
            <person name="Bruce D."/>
            <person name="Han C."/>
            <person name="Tapia R."/>
            <person name="Gilna P."/>
            <person name="Schmutz J."/>
            <person name="Larimer F."/>
            <person name="Land M."/>
            <person name="Hauser L."/>
            <person name="Kyrpides N."/>
            <person name="Mikhailova N."/>
            <person name="Richardson P."/>
        </authorList>
    </citation>
    <scope>NUCLEOTIDE SEQUENCE [LARGE SCALE GENOMIC DNA]</scope>
    <source>
        <strain>NCIMB 400</strain>
    </source>
</reference>
<accession>Q07ZE8</accession>
<proteinExistence type="inferred from homology"/>
<comment type="function">
    <text evidence="1">Has flap endonuclease activity. During DNA replication, flap endonucleases cleave the 5'-overhanging flap structure that is generated by displacement synthesis when DNA polymerase encounters the 5'-end of a downstream Okazaki fragment.</text>
</comment>
<comment type="cofactor">
    <cofactor evidence="1">
        <name>Mg(2+)</name>
        <dbReference type="ChEBI" id="CHEBI:18420"/>
    </cofactor>
    <text evidence="1">Binds 2 Mg(2+) per subunit. Only one magnesium ion has a direct interaction with the protein, the other interactions are indirect.</text>
</comment>
<comment type="cofactor">
    <cofactor evidence="1">
        <name>K(+)</name>
        <dbReference type="ChEBI" id="CHEBI:29103"/>
    </cofactor>
    <text evidence="1">Binds 1 K(+) per subunit. The potassium ion strongly increases the affinity for DNA.</text>
</comment>
<comment type="similarity">
    <text evidence="1">Belongs to the Xni family.</text>
</comment>
<gene>
    <name evidence="1" type="primary">xni</name>
    <name evidence="1" type="synonym">ygdG</name>
    <name type="ordered locus">Sfri_2776</name>
</gene>
<organism>
    <name type="scientific">Shewanella frigidimarina (strain NCIMB 400)</name>
    <dbReference type="NCBI Taxonomy" id="318167"/>
    <lineage>
        <taxon>Bacteria</taxon>
        <taxon>Pseudomonadati</taxon>
        <taxon>Pseudomonadota</taxon>
        <taxon>Gammaproteobacteria</taxon>
        <taxon>Alteromonadales</taxon>
        <taxon>Shewanellaceae</taxon>
        <taxon>Shewanella</taxon>
    </lineage>
</organism>
<dbReference type="EC" id="3.1.-.-" evidence="1"/>
<dbReference type="EMBL" id="CP000447">
    <property type="protein sequence ID" value="ABI72616.1"/>
    <property type="molecule type" value="Genomic_DNA"/>
</dbReference>
<dbReference type="RefSeq" id="WP_011638225.1">
    <property type="nucleotide sequence ID" value="NC_008345.1"/>
</dbReference>
<dbReference type="SMR" id="Q07ZE8"/>
<dbReference type="STRING" id="318167.Sfri_2776"/>
<dbReference type="KEGG" id="sfr:Sfri_2776"/>
<dbReference type="eggNOG" id="COG0258">
    <property type="taxonomic scope" value="Bacteria"/>
</dbReference>
<dbReference type="HOGENOM" id="CLU_004675_1_2_6"/>
<dbReference type="OrthoDB" id="8070997at2"/>
<dbReference type="Proteomes" id="UP000000684">
    <property type="component" value="Chromosome"/>
</dbReference>
<dbReference type="GO" id="GO:0008409">
    <property type="term" value="F:5'-3' exonuclease activity"/>
    <property type="evidence" value="ECO:0007669"/>
    <property type="project" value="InterPro"/>
</dbReference>
<dbReference type="GO" id="GO:0017108">
    <property type="term" value="F:5'-flap endonuclease activity"/>
    <property type="evidence" value="ECO:0007669"/>
    <property type="project" value="UniProtKB-UniRule"/>
</dbReference>
<dbReference type="GO" id="GO:0003677">
    <property type="term" value="F:DNA binding"/>
    <property type="evidence" value="ECO:0007669"/>
    <property type="project" value="UniProtKB-UniRule"/>
</dbReference>
<dbReference type="GO" id="GO:0000287">
    <property type="term" value="F:magnesium ion binding"/>
    <property type="evidence" value="ECO:0007669"/>
    <property type="project" value="UniProtKB-UniRule"/>
</dbReference>
<dbReference type="GO" id="GO:0030955">
    <property type="term" value="F:potassium ion binding"/>
    <property type="evidence" value="ECO:0007669"/>
    <property type="project" value="UniProtKB-UniRule"/>
</dbReference>
<dbReference type="GO" id="GO:0033567">
    <property type="term" value="P:DNA replication, Okazaki fragment processing"/>
    <property type="evidence" value="ECO:0007669"/>
    <property type="project" value="UniProtKB-UniRule"/>
</dbReference>
<dbReference type="CDD" id="cd09898">
    <property type="entry name" value="H3TH_53EXO"/>
    <property type="match status" value="1"/>
</dbReference>
<dbReference type="CDD" id="cd09859">
    <property type="entry name" value="PIN_53EXO"/>
    <property type="match status" value="1"/>
</dbReference>
<dbReference type="FunFam" id="1.10.150.20:FF:000003">
    <property type="entry name" value="DNA polymerase I"/>
    <property type="match status" value="1"/>
</dbReference>
<dbReference type="Gene3D" id="1.10.150.20">
    <property type="entry name" value="5' to 3' exonuclease, C-terminal subdomain"/>
    <property type="match status" value="1"/>
</dbReference>
<dbReference type="Gene3D" id="3.40.50.1010">
    <property type="entry name" value="5'-nuclease"/>
    <property type="match status" value="1"/>
</dbReference>
<dbReference type="HAMAP" id="MF_01192">
    <property type="entry name" value="Xni"/>
    <property type="match status" value="1"/>
</dbReference>
<dbReference type="InterPro" id="IPR020046">
    <property type="entry name" value="5-3_exonucl_a-hlix_arch_N"/>
</dbReference>
<dbReference type="InterPro" id="IPR002421">
    <property type="entry name" value="5-3_exonuclease"/>
</dbReference>
<dbReference type="InterPro" id="IPR036279">
    <property type="entry name" value="5-3_exonuclease_C_sf"/>
</dbReference>
<dbReference type="InterPro" id="IPR020045">
    <property type="entry name" value="DNA_polI_H3TH"/>
</dbReference>
<dbReference type="InterPro" id="IPR038969">
    <property type="entry name" value="FEN"/>
</dbReference>
<dbReference type="InterPro" id="IPR008918">
    <property type="entry name" value="HhH2"/>
</dbReference>
<dbReference type="InterPro" id="IPR029060">
    <property type="entry name" value="PIN-like_dom_sf"/>
</dbReference>
<dbReference type="InterPro" id="IPR022895">
    <property type="entry name" value="Xni"/>
</dbReference>
<dbReference type="NCBIfam" id="NF007017">
    <property type="entry name" value="PRK09482.1"/>
    <property type="match status" value="1"/>
</dbReference>
<dbReference type="PANTHER" id="PTHR42646:SF2">
    <property type="entry name" value="5'-3' EXONUCLEASE FAMILY PROTEIN"/>
    <property type="match status" value="1"/>
</dbReference>
<dbReference type="PANTHER" id="PTHR42646">
    <property type="entry name" value="FLAP ENDONUCLEASE XNI"/>
    <property type="match status" value="1"/>
</dbReference>
<dbReference type="Pfam" id="PF01367">
    <property type="entry name" value="5_3_exonuc"/>
    <property type="match status" value="1"/>
</dbReference>
<dbReference type="Pfam" id="PF02739">
    <property type="entry name" value="5_3_exonuc_N"/>
    <property type="match status" value="1"/>
</dbReference>
<dbReference type="SMART" id="SM00475">
    <property type="entry name" value="53EXOc"/>
    <property type="match status" value="1"/>
</dbReference>
<dbReference type="SMART" id="SM00279">
    <property type="entry name" value="HhH2"/>
    <property type="match status" value="1"/>
</dbReference>
<dbReference type="SUPFAM" id="SSF47807">
    <property type="entry name" value="5' to 3' exonuclease, C-terminal subdomain"/>
    <property type="match status" value="1"/>
</dbReference>
<dbReference type="SUPFAM" id="SSF88723">
    <property type="entry name" value="PIN domain-like"/>
    <property type="match status" value="1"/>
</dbReference>
<protein>
    <recommendedName>
        <fullName evidence="1">Flap endonuclease Xni</fullName>
        <shortName evidence="1">FEN</shortName>
        <ecNumber evidence="1">3.1.-.-</ecNumber>
    </recommendedName>
</protein>
<keyword id="KW-0238">DNA-binding</keyword>
<keyword id="KW-0255">Endonuclease</keyword>
<keyword id="KW-0378">Hydrolase</keyword>
<keyword id="KW-0460">Magnesium</keyword>
<keyword id="KW-0479">Metal-binding</keyword>
<keyword id="KW-0540">Nuclease</keyword>
<keyword id="KW-0630">Potassium</keyword>
<keyword id="KW-1185">Reference proteome</keyword>
<sequence>MNKLLIIDGLNLVRRIHAVLPDENDIASVQERVLAASKKMLLQHQPTHCMVVWDGNEPSWRKTLYSDYKKGRKPMPTALSDGLVNIKATLAEHDINSFDAQSEADDVIATIAMKMISNKGEVIIVSTDKGFSQLPTKNLTLWDHFNQQVFDVEQYEKKLGIEQYQMLDFIALAGDSGNKIPGIMGIGPKSAADLLNKFRTLANLYRSLDNLGAKQALKLAEGKEIARISYKLAQLQCDIPLNINLKQFRINPITN</sequence>
<evidence type="ECO:0000255" key="1">
    <source>
        <dbReference type="HAMAP-Rule" id="MF_01192"/>
    </source>
</evidence>
<feature type="chain" id="PRO_0000297875" description="Flap endonuclease Xni">
    <location>
        <begin position="1"/>
        <end position="255"/>
    </location>
</feature>
<feature type="domain" description="5'-3' exonuclease" evidence="1">
    <location>
        <begin position="163"/>
        <end position="253"/>
    </location>
</feature>
<feature type="region of interest" description="Interaction with DNA" evidence="1">
    <location>
        <begin position="185"/>
        <end position="190"/>
    </location>
</feature>
<feature type="binding site" evidence="1">
    <location>
        <position position="105"/>
    </location>
    <ligand>
        <name>Mg(2+)</name>
        <dbReference type="ChEBI" id="CHEBI:18420"/>
    </ligand>
</feature>
<feature type="binding site" evidence="1">
    <location>
        <position position="172"/>
    </location>
    <ligand>
        <name>K(+)</name>
        <dbReference type="ChEBI" id="CHEBI:29103"/>
    </ligand>
</feature>
<feature type="binding site" evidence="1">
    <location>
        <position position="173"/>
    </location>
    <ligand>
        <name>K(+)</name>
        <dbReference type="ChEBI" id="CHEBI:29103"/>
    </ligand>
</feature>
<feature type="binding site" evidence="1">
    <location>
        <position position="181"/>
    </location>
    <ligand>
        <name>K(+)</name>
        <dbReference type="ChEBI" id="CHEBI:29103"/>
    </ligand>
</feature>
<feature type="binding site" evidence="1">
    <location>
        <position position="183"/>
    </location>
    <ligand>
        <name>K(+)</name>
        <dbReference type="ChEBI" id="CHEBI:29103"/>
    </ligand>
</feature>
<feature type="binding site" evidence="1">
    <location>
        <position position="186"/>
    </location>
    <ligand>
        <name>K(+)</name>
        <dbReference type="ChEBI" id="CHEBI:29103"/>
    </ligand>
</feature>
<name>XNI_SHEFN</name>